<proteinExistence type="inferred from homology"/>
<gene>
    <name evidence="1" type="primary">argH</name>
    <name type="ordered locus">BruAb1_1957</name>
</gene>
<keyword id="KW-0028">Amino-acid biosynthesis</keyword>
<keyword id="KW-0055">Arginine biosynthesis</keyword>
<keyword id="KW-0963">Cytoplasm</keyword>
<keyword id="KW-0456">Lyase</keyword>
<dbReference type="EC" id="4.3.2.1" evidence="1"/>
<dbReference type="EMBL" id="AE017223">
    <property type="protein sequence ID" value="AAX75261.1"/>
    <property type="molecule type" value="Genomic_DNA"/>
</dbReference>
<dbReference type="RefSeq" id="WP_002965047.1">
    <property type="nucleotide sequence ID" value="NC_006932.1"/>
</dbReference>
<dbReference type="SMR" id="Q57AS3"/>
<dbReference type="EnsemblBacteria" id="AAX75261">
    <property type="protein sequence ID" value="AAX75261"/>
    <property type="gene ID" value="BruAb1_1957"/>
</dbReference>
<dbReference type="GeneID" id="93017699"/>
<dbReference type="KEGG" id="bmb:BruAb1_1957"/>
<dbReference type="HOGENOM" id="CLU_027272_2_3_5"/>
<dbReference type="UniPathway" id="UPA00068">
    <property type="reaction ID" value="UER00114"/>
</dbReference>
<dbReference type="Proteomes" id="UP000000540">
    <property type="component" value="Chromosome I"/>
</dbReference>
<dbReference type="GO" id="GO:0005829">
    <property type="term" value="C:cytosol"/>
    <property type="evidence" value="ECO:0007669"/>
    <property type="project" value="TreeGrafter"/>
</dbReference>
<dbReference type="GO" id="GO:0004056">
    <property type="term" value="F:argininosuccinate lyase activity"/>
    <property type="evidence" value="ECO:0007669"/>
    <property type="project" value="UniProtKB-UniRule"/>
</dbReference>
<dbReference type="GO" id="GO:0042450">
    <property type="term" value="P:arginine biosynthetic process via ornithine"/>
    <property type="evidence" value="ECO:0007669"/>
    <property type="project" value="InterPro"/>
</dbReference>
<dbReference type="GO" id="GO:0006526">
    <property type="term" value="P:L-arginine biosynthetic process"/>
    <property type="evidence" value="ECO:0007669"/>
    <property type="project" value="UniProtKB-UniRule"/>
</dbReference>
<dbReference type="CDD" id="cd01359">
    <property type="entry name" value="Argininosuccinate_lyase"/>
    <property type="match status" value="1"/>
</dbReference>
<dbReference type="FunFam" id="1.10.275.10:FF:000002">
    <property type="entry name" value="Argininosuccinate lyase"/>
    <property type="match status" value="1"/>
</dbReference>
<dbReference type="FunFam" id="1.10.40.30:FF:000001">
    <property type="entry name" value="Argininosuccinate lyase"/>
    <property type="match status" value="1"/>
</dbReference>
<dbReference type="FunFam" id="1.20.200.10:FF:000015">
    <property type="entry name" value="argininosuccinate lyase isoform X2"/>
    <property type="match status" value="1"/>
</dbReference>
<dbReference type="Gene3D" id="1.10.40.30">
    <property type="entry name" value="Fumarase/aspartase (C-terminal domain)"/>
    <property type="match status" value="1"/>
</dbReference>
<dbReference type="Gene3D" id="1.20.200.10">
    <property type="entry name" value="Fumarase/aspartase (Central domain)"/>
    <property type="match status" value="1"/>
</dbReference>
<dbReference type="Gene3D" id="1.10.275.10">
    <property type="entry name" value="Fumarase/aspartase (N-terminal domain)"/>
    <property type="match status" value="1"/>
</dbReference>
<dbReference type="HAMAP" id="MF_00006">
    <property type="entry name" value="Arg_succ_lyase"/>
    <property type="match status" value="1"/>
</dbReference>
<dbReference type="InterPro" id="IPR029419">
    <property type="entry name" value="Arg_succ_lyase_C"/>
</dbReference>
<dbReference type="InterPro" id="IPR009049">
    <property type="entry name" value="Argininosuccinate_lyase"/>
</dbReference>
<dbReference type="InterPro" id="IPR024083">
    <property type="entry name" value="Fumarase/histidase_N"/>
</dbReference>
<dbReference type="InterPro" id="IPR020557">
    <property type="entry name" value="Fumarate_lyase_CS"/>
</dbReference>
<dbReference type="InterPro" id="IPR000362">
    <property type="entry name" value="Fumarate_lyase_fam"/>
</dbReference>
<dbReference type="InterPro" id="IPR022761">
    <property type="entry name" value="Fumarate_lyase_N"/>
</dbReference>
<dbReference type="InterPro" id="IPR008948">
    <property type="entry name" value="L-Aspartase-like"/>
</dbReference>
<dbReference type="NCBIfam" id="TIGR00838">
    <property type="entry name" value="argH"/>
    <property type="match status" value="1"/>
</dbReference>
<dbReference type="PANTHER" id="PTHR43814">
    <property type="entry name" value="ARGININOSUCCINATE LYASE"/>
    <property type="match status" value="1"/>
</dbReference>
<dbReference type="PANTHER" id="PTHR43814:SF1">
    <property type="entry name" value="ARGININOSUCCINATE LYASE"/>
    <property type="match status" value="1"/>
</dbReference>
<dbReference type="Pfam" id="PF14698">
    <property type="entry name" value="ASL_C2"/>
    <property type="match status" value="1"/>
</dbReference>
<dbReference type="Pfam" id="PF00206">
    <property type="entry name" value="Lyase_1"/>
    <property type="match status" value="1"/>
</dbReference>
<dbReference type="PRINTS" id="PR00145">
    <property type="entry name" value="ARGSUCLYASE"/>
</dbReference>
<dbReference type="PRINTS" id="PR00149">
    <property type="entry name" value="FUMRATELYASE"/>
</dbReference>
<dbReference type="SUPFAM" id="SSF48557">
    <property type="entry name" value="L-aspartase-like"/>
    <property type="match status" value="1"/>
</dbReference>
<dbReference type="PROSITE" id="PS00163">
    <property type="entry name" value="FUMARATE_LYASES"/>
    <property type="match status" value="1"/>
</dbReference>
<feature type="chain" id="PRO_0000240716" description="Argininosuccinate lyase">
    <location>
        <begin position="1"/>
        <end position="466"/>
    </location>
</feature>
<accession>Q57AS3</accession>
<organism>
    <name type="scientific">Brucella abortus biovar 1 (strain 9-941)</name>
    <dbReference type="NCBI Taxonomy" id="262698"/>
    <lineage>
        <taxon>Bacteria</taxon>
        <taxon>Pseudomonadati</taxon>
        <taxon>Pseudomonadota</taxon>
        <taxon>Alphaproteobacteria</taxon>
        <taxon>Hyphomicrobiales</taxon>
        <taxon>Brucellaceae</taxon>
        <taxon>Brucella/Ochrobactrum group</taxon>
        <taxon>Brucella</taxon>
    </lineage>
</organism>
<name>ARLY_BRUAB</name>
<sequence>MSEQKSSNQMWGGRFASGPDAIMEEINASIGFDRKLYAQDIQGSLAHAAMLAKTGIIAAEDHKQIENGLKTIRKEIEEGKFTFSRKLEDIHMNIEARLAELIGPAAGRLHTARSRNDQVAVDFRLWVKQELEKTAAALKNLIEAFLERAEEHAATVMPGFTHLQTAQPVTFGHHCMAYVEMFGRDLSRVRDAIERIDESPLGAAALAGTGFPIDRHMTAKALGFREPTRNSLDSVSDRDYALEFLSLAAICAGHLSRLAEEIVIWSTPQFNFVRLSDAFSTGSSIMPQKKNPDAAELVRAKTGRINGSLVALLTIMKGLPLAYSKDMQEDKEQVFDAAENLELAIAAMAGMVRDLTVNVAAMKKAAGSGYSTATDLADWLVRTLGLPFREAHHVTGRAVALAESRKVDLAKLSLEELQSINPAITAEVFGYLTVEKSVKSRQSFGGTAPQEVRRQIRYWKKRIAKA</sequence>
<reference key="1">
    <citation type="journal article" date="2005" name="J. Bacteriol.">
        <title>Completion of the genome sequence of Brucella abortus and comparison to the highly similar genomes of Brucella melitensis and Brucella suis.</title>
        <authorList>
            <person name="Halling S.M."/>
            <person name="Peterson-Burch B.D."/>
            <person name="Bricker B.J."/>
            <person name="Zuerner R.L."/>
            <person name="Qing Z."/>
            <person name="Li L.-L."/>
            <person name="Kapur V."/>
            <person name="Alt D.P."/>
            <person name="Olsen S.C."/>
        </authorList>
    </citation>
    <scope>NUCLEOTIDE SEQUENCE [LARGE SCALE GENOMIC DNA]</scope>
    <source>
        <strain>9-941</strain>
    </source>
</reference>
<comment type="catalytic activity">
    <reaction evidence="1">
        <text>2-(N(omega)-L-arginino)succinate = fumarate + L-arginine</text>
        <dbReference type="Rhea" id="RHEA:24020"/>
        <dbReference type="ChEBI" id="CHEBI:29806"/>
        <dbReference type="ChEBI" id="CHEBI:32682"/>
        <dbReference type="ChEBI" id="CHEBI:57472"/>
        <dbReference type="EC" id="4.3.2.1"/>
    </reaction>
</comment>
<comment type="pathway">
    <text evidence="1">Amino-acid biosynthesis; L-arginine biosynthesis; L-arginine from L-ornithine and carbamoyl phosphate: step 3/3.</text>
</comment>
<comment type="subcellular location">
    <subcellularLocation>
        <location evidence="1">Cytoplasm</location>
    </subcellularLocation>
</comment>
<comment type="similarity">
    <text evidence="1">Belongs to the lyase 1 family. Argininosuccinate lyase subfamily.</text>
</comment>
<protein>
    <recommendedName>
        <fullName evidence="1">Argininosuccinate lyase</fullName>
        <shortName evidence="1">ASAL</shortName>
        <ecNumber evidence="1">4.3.2.1</ecNumber>
    </recommendedName>
    <alternativeName>
        <fullName evidence="1">Arginosuccinase</fullName>
    </alternativeName>
</protein>
<evidence type="ECO:0000255" key="1">
    <source>
        <dbReference type="HAMAP-Rule" id="MF_00006"/>
    </source>
</evidence>